<comment type="catalytic activity">
    <reaction evidence="1">
        <text>(2R)-3-phosphoglycerate + ATP = (2R)-3-phospho-glyceroyl phosphate + ADP</text>
        <dbReference type="Rhea" id="RHEA:14801"/>
        <dbReference type="ChEBI" id="CHEBI:30616"/>
        <dbReference type="ChEBI" id="CHEBI:57604"/>
        <dbReference type="ChEBI" id="CHEBI:58272"/>
        <dbReference type="ChEBI" id="CHEBI:456216"/>
        <dbReference type="EC" id="2.7.2.3"/>
    </reaction>
</comment>
<comment type="pathway">
    <text evidence="1">Carbohydrate degradation; glycolysis; pyruvate from D-glyceraldehyde 3-phosphate: step 2/5.</text>
</comment>
<comment type="subunit">
    <text evidence="1">Monomer.</text>
</comment>
<comment type="subcellular location">
    <subcellularLocation>
        <location evidence="1">Cytoplasm</location>
    </subcellularLocation>
</comment>
<comment type="similarity">
    <text evidence="1">Belongs to the phosphoglycerate kinase family.</text>
</comment>
<feature type="chain" id="PRO_1000058039" description="Phosphoglycerate kinase">
    <location>
        <begin position="1"/>
        <end position="391"/>
    </location>
</feature>
<feature type="binding site" evidence="1">
    <location>
        <begin position="21"/>
        <end position="23"/>
    </location>
    <ligand>
        <name>substrate</name>
    </ligand>
</feature>
<feature type="binding site" evidence="1">
    <location>
        <position position="36"/>
    </location>
    <ligand>
        <name>substrate</name>
    </ligand>
</feature>
<feature type="binding site" evidence="1">
    <location>
        <begin position="59"/>
        <end position="62"/>
    </location>
    <ligand>
        <name>substrate</name>
    </ligand>
</feature>
<feature type="binding site" evidence="1">
    <location>
        <position position="113"/>
    </location>
    <ligand>
        <name>substrate</name>
    </ligand>
</feature>
<feature type="binding site" evidence="1">
    <location>
        <position position="146"/>
    </location>
    <ligand>
        <name>substrate</name>
    </ligand>
</feature>
<feature type="binding site" evidence="1">
    <location>
        <position position="197"/>
    </location>
    <ligand>
        <name>ATP</name>
        <dbReference type="ChEBI" id="CHEBI:30616"/>
    </ligand>
</feature>
<feature type="binding site" evidence="1">
    <location>
        <position position="319"/>
    </location>
    <ligand>
        <name>ATP</name>
        <dbReference type="ChEBI" id="CHEBI:30616"/>
    </ligand>
</feature>
<feature type="binding site" evidence="1">
    <location>
        <begin position="345"/>
        <end position="348"/>
    </location>
    <ligand>
        <name>ATP</name>
        <dbReference type="ChEBI" id="CHEBI:30616"/>
    </ligand>
</feature>
<organism>
    <name type="scientific">Pseudoalteromonas translucida (strain TAC 125)</name>
    <dbReference type="NCBI Taxonomy" id="326442"/>
    <lineage>
        <taxon>Bacteria</taxon>
        <taxon>Pseudomonadati</taxon>
        <taxon>Pseudomonadota</taxon>
        <taxon>Gammaproteobacteria</taxon>
        <taxon>Alteromonadales</taxon>
        <taxon>Pseudoalteromonadaceae</taxon>
        <taxon>Pseudoalteromonas</taxon>
    </lineage>
</organism>
<keyword id="KW-0067">ATP-binding</keyword>
<keyword id="KW-0963">Cytoplasm</keyword>
<keyword id="KW-0324">Glycolysis</keyword>
<keyword id="KW-0418">Kinase</keyword>
<keyword id="KW-0547">Nucleotide-binding</keyword>
<keyword id="KW-1185">Reference proteome</keyword>
<keyword id="KW-0808">Transferase</keyword>
<protein>
    <recommendedName>
        <fullName evidence="1">Phosphoglycerate kinase</fullName>
        <ecNumber evidence="1">2.7.2.3</ecNumber>
    </recommendedName>
</protein>
<accession>Q3ILL7</accession>
<dbReference type="EC" id="2.7.2.3" evidence="1"/>
<dbReference type="EMBL" id="CR954246">
    <property type="protein sequence ID" value="CAI85681.1"/>
    <property type="molecule type" value="Genomic_DNA"/>
</dbReference>
<dbReference type="SMR" id="Q3ILL7"/>
<dbReference type="STRING" id="326442.PSHAa0595"/>
<dbReference type="KEGG" id="pha:PSHAa0595"/>
<dbReference type="PATRIC" id="fig|326442.8.peg.560"/>
<dbReference type="eggNOG" id="COG0126">
    <property type="taxonomic scope" value="Bacteria"/>
</dbReference>
<dbReference type="HOGENOM" id="CLU_025427_0_2_6"/>
<dbReference type="BioCyc" id="PHAL326442:PSHA_RS02920-MONOMER"/>
<dbReference type="UniPathway" id="UPA00109">
    <property type="reaction ID" value="UER00185"/>
</dbReference>
<dbReference type="Proteomes" id="UP000006843">
    <property type="component" value="Chromosome I"/>
</dbReference>
<dbReference type="GO" id="GO:0005829">
    <property type="term" value="C:cytosol"/>
    <property type="evidence" value="ECO:0007669"/>
    <property type="project" value="TreeGrafter"/>
</dbReference>
<dbReference type="GO" id="GO:0043531">
    <property type="term" value="F:ADP binding"/>
    <property type="evidence" value="ECO:0007669"/>
    <property type="project" value="TreeGrafter"/>
</dbReference>
<dbReference type="GO" id="GO:0005524">
    <property type="term" value="F:ATP binding"/>
    <property type="evidence" value="ECO:0007669"/>
    <property type="project" value="UniProtKB-KW"/>
</dbReference>
<dbReference type="GO" id="GO:0004618">
    <property type="term" value="F:phosphoglycerate kinase activity"/>
    <property type="evidence" value="ECO:0007669"/>
    <property type="project" value="UniProtKB-UniRule"/>
</dbReference>
<dbReference type="GO" id="GO:0006094">
    <property type="term" value="P:gluconeogenesis"/>
    <property type="evidence" value="ECO:0007669"/>
    <property type="project" value="TreeGrafter"/>
</dbReference>
<dbReference type="GO" id="GO:0006096">
    <property type="term" value="P:glycolytic process"/>
    <property type="evidence" value="ECO:0007669"/>
    <property type="project" value="UniProtKB-UniRule"/>
</dbReference>
<dbReference type="FunFam" id="3.40.50.1260:FF:000001">
    <property type="entry name" value="Phosphoglycerate kinase"/>
    <property type="match status" value="1"/>
</dbReference>
<dbReference type="FunFam" id="3.40.50.1260:FF:000002">
    <property type="entry name" value="Phosphoglycerate kinase"/>
    <property type="match status" value="1"/>
</dbReference>
<dbReference type="Gene3D" id="3.40.50.1260">
    <property type="entry name" value="Phosphoglycerate kinase, N-terminal domain"/>
    <property type="match status" value="2"/>
</dbReference>
<dbReference type="HAMAP" id="MF_00145">
    <property type="entry name" value="Phosphoglyc_kinase"/>
    <property type="match status" value="1"/>
</dbReference>
<dbReference type="InterPro" id="IPR001576">
    <property type="entry name" value="Phosphoglycerate_kinase"/>
</dbReference>
<dbReference type="InterPro" id="IPR015911">
    <property type="entry name" value="Phosphoglycerate_kinase_CS"/>
</dbReference>
<dbReference type="InterPro" id="IPR015824">
    <property type="entry name" value="Phosphoglycerate_kinase_N"/>
</dbReference>
<dbReference type="InterPro" id="IPR036043">
    <property type="entry name" value="Phosphoglycerate_kinase_sf"/>
</dbReference>
<dbReference type="PANTHER" id="PTHR11406">
    <property type="entry name" value="PHOSPHOGLYCERATE KINASE"/>
    <property type="match status" value="1"/>
</dbReference>
<dbReference type="PANTHER" id="PTHR11406:SF23">
    <property type="entry name" value="PHOSPHOGLYCERATE KINASE 1, CHLOROPLASTIC-RELATED"/>
    <property type="match status" value="1"/>
</dbReference>
<dbReference type="Pfam" id="PF00162">
    <property type="entry name" value="PGK"/>
    <property type="match status" value="1"/>
</dbReference>
<dbReference type="PIRSF" id="PIRSF000724">
    <property type="entry name" value="Pgk"/>
    <property type="match status" value="1"/>
</dbReference>
<dbReference type="PRINTS" id="PR00477">
    <property type="entry name" value="PHGLYCKINASE"/>
</dbReference>
<dbReference type="SUPFAM" id="SSF53748">
    <property type="entry name" value="Phosphoglycerate kinase"/>
    <property type="match status" value="1"/>
</dbReference>
<dbReference type="PROSITE" id="PS00111">
    <property type="entry name" value="PGLYCERATE_KINASE"/>
    <property type="match status" value="1"/>
</dbReference>
<sequence>MSVIKMADLDLNGKRVLIREDLNVPVKAGKVTSDARIRAALPTIKLALEKGAKVMVMSHLGRPTEGEYDEEFSLAPVVNYLNDALEQTVRLEKDYLNGVELADNEVVVFENVRFNKGEKNNDEALSKQLAALCDVYVMDAFGTAHRAQASTHGVGLFADVACAGPLLSAELEALGKALDNPARPLVAIVGGSKVSTKLTVLDSLSKIVDQLVTGGGIANTFIAAAGYPVGKSLYEADLMDEANRLCAAAVANNGEIPVPTDVVVGNEFSDSAVATLKDVSEVTSDDMIFDIGPDTANKLAKIIANAGTVVWNGPVGVFEFDQFGNGTRAIAQAIANSNAFSIAGGGDTLAAIDKYGISDKISYISTGGGAFLEFLEGKKLPAVEMLESRAK</sequence>
<gene>
    <name evidence="1" type="primary">pgk</name>
    <name type="ordered locus">PSHAa0595</name>
</gene>
<proteinExistence type="inferred from homology"/>
<reference key="1">
    <citation type="journal article" date="2005" name="Genome Res.">
        <title>Coping with cold: the genome of the versatile marine Antarctica bacterium Pseudoalteromonas haloplanktis TAC125.</title>
        <authorList>
            <person name="Medigue C."/>
            <person name="Krin E."/>
            <person name="Pascal G."/>
            <person name="Barbe V."/>
            <person name="Bernsel A."/>
            <person name="Bertin P.N."/>
            <person name="Cheung F."/>
            <person name="Cruveiller S."/>
            <person name="D'Amico S."/>
            <person name="Duilio A."/>
            <person name="Fang G."/>
            <person name="Feller G."/>
            <person name="Ho C."/>
            <person name="Mangenot S."/>
            <person name="Marino G."/>
            <person name="Nilsson J."/>
            <person name="Parrilli E."/>
            <person name="Rocha E.P.C."/>
            <person name="Rouy Z."/>
            <person name="Sekowska A."/>
            <person name="Tutino M.L."/>
            <person name="Vallenet D."/>
            <person name="von Heijne G."/>
            <person name="Danchin A."/>
        </authorList>
    </citation>
    <scope>NUCLEOTIDE SEQUENCE [LARGE SCALE GENOMIC DNA]</scope>
    <source>
        <strain>TAC 125</strain>
    </source>
</reference>
<name>PGK_PSET1</name>
<evidence type="ECO:0000255" key="1">
    <source>
        <dbReference type="HAMAP-Rule" id="MF_00145"/>
    </source>
</evidence>